<keyword id="KW-1185">Reference proteome</keyword>
<name>Y1086_METJA</name>
<dbReference type="EMBL" id="L77117">
    <property type="protein sequence ID" value="AAB99087.1"/>
    <property type="molecule type" value="Genomic_DNA"/>
</dbReference>
<dbReference type="PIR" id="E64435">
    <property type="entry name" value="E64435"/>
</dbReference>
<dbReference type="RefSeq" id="WP_010870598.1">
    <property type="nucleotide sequence ID" value="NC_000909.1"/>
</dbReference>
<dbReference type="STRING" id="243232.MJ_1086"/>
<dbReference type="PaxDb" id="243232-MJ_1086"/>
<dbReference type="DNASU" id="1451982"/>
<dbReference type="EnsemblBacteria" id="AAB99087">
    <property type="protein sequence ID" value="AAB99087"/>
    <property type="gene ID" value="MJ_1086"/>
</dbReference>
<dbReference type="GeneID" id="1451982"/>
<dbReference type="KEGG" id="mja:MJ_1086"/>
<dbReference type="eggNOG" id="arCOG01831">
    <property type="taxonomic scope" value="Archaea"/>
</dbReference>
<dbReference type="HOGENOM" id="CLU_072733_0_0_2"/>
<dbReference type="InParanoid" id="Q58486"/>
<dbReference type="OrthoDB" id="18771at2157"/>
<dbReference type="PhylomeDB" id="Q58486"/>
<dbReference type="Proteomes" id="UP000000805">
    <property type="component" value="Chromosome"/>
</dbReference>
<dbReference type="GO" id="GO:0016779">
    <property type="term" value="F:nucleotidyltransferase activity"/>
    <property type="evidence" value="ECO:0007669"/>
    <property type="project" value="InterPro"/>
</dbReference>
<dbReference type="InterPro" id="IPR002934">
    <property type="entry name" value="Polymerase_NTP_transf_dom"/>
</dbReference>
<dbReference type="Pfam" id="PF01909">
    <property type="entry name" value="NTP_transf_2"/>
    <property type="match status" value="1"/>
</dbReference>
<feature type="chain" id="PRO_0000107164" description="Uncharacterized protein MJ1086">
    <location>
        <begin position="1"/>
        <end position="340"/>
    </location>
</feature>
<gene>
    <name type="ordered locus">MJ1086</name>
</gene>
<sequence>MKVRIRDFIETTEGLYFAVNTYAHPKNKFFAFLRYVPYEFVDFKIEDNNIREINGRKYIKMAESKIAYKFLEEKFSKYLYYDETINVLMHAIPKEDVKRILRPKERLNEIINEENNLNELEEKCRKLALILEDYGVPIKSMGVSGSLLLKLNNKNSDIDFVIYGKDMHKKAREALKQAFEDNKLKPLSDDFWKIAYKKRIKDKTLTYEEFVFYEKRKYNRGIVDNTMFDLLFTREWDEITEKYGDKRYKNLGFAKIEGRVLNDDFAFDNPAVYKIECYNDEDIKEVVSFTHTYAGQCFNGEEIVARGKLEEVIDKSGERYKRIVVGTTREAFNEYIKIKR</sequence>
<reference key="1">
    <citation type="journal article" date="1996" name="Science">
        <title>Complete genome sequence of the methanogenic archaeon, Methanococcus jannaschii.</title>
        <authorList>
            <person name="Bult C.J."/>
            <person name="White O."/>
            <person name="Olsen G.J."/>
            <person name="Zhou L."/>
            <person name="Fleischmann R.D."/>
            <person name="Sutton G.G."/>
            <person name="Blake J.A."/>
            <person name="FitzGerald L.M."/>
            <person name="Clayton R.A."/>
            <person name="Gocayne J.D."/>
            <person name="Kerlavage A.R."/>
            <person name="Dougherty B.A."/>
            <person name="Tomb J.-F."/>
            <person name="Adams M.D."/>
            <person name="Reich C.I."/>
            <person name="Overbeek R."/>
            <person name="Kirkness E.F."/>
            <person name="Weinstock K.G."/>
            <person name="Merrick J.M."/>
            <person name="Glodek A."/>
            <person name="Scott J.L."/>
            <person name="Geoghagen N.S.M."/>
            <person name="Weidman J.F."/>
            <person name="Fuhrmann J.L."/>
            <person name="Nguyen D."/>
            <person name="Utterback T.R."/>
            <person name="Kelley J.M."/>
            <person name="Peterson J.D."/>
            <person name="Sadow P.W."/>
            <person name="Hanna M.C."/>
            <person name="Cotton M.D."/>
            <person name="Roberts K.M."/>
            <person name="Hurst M.A."/>
            <person name="Kaine B.P."/>
            <person name="Borodovsky M."/>
            <person name="Klenk H.-P."/>
            <person name="Fraser C.M."/>
            <person name="Smith H.O."/>
            <person name="Woese C.R."/>
            <person name="Venter J.C."/>
        </authorList>
    </citation>
    <scope>NUCLEOTIDE SEQUENCE [LARGE SCALE GENOMIC DNA]</scope>
    <source>
        <strain>ATCC 43067 / DSM 2661 / JAL-1 / JCM 10045 / NBRC 100440</strain>
    </source>
</reference>
<protein>
    <recommendedName>
        <fullName>Uncharacterized protein MJ1086</fullName>
    </recommendedName>
</protein>
<proteinExistence type="predicted"/>
<accession>Q58486</accession>
<organism>
    <name type="scientific">Methanocaldococcus jannaschii (strain ATCC 43067 / DSM 2661 / JAL-1 / JCM 10045 / NBRC 100440)</name>
    <name type="common">Methanococcus jannaschii</name>
    <dbReference type="NCBI Taxonomy" id="243232"/>
    <lineage>
        <taxon>Archaea</taxon>
        <taxon>Methanobacteriati</taxon>
        <taxon>Methanobacteriota</taxon>
        <taxon>Methanomada group</taxon>
        <taxon>Methanococci</taxon>
        <taxon>Methanococcales</taxon>
        <taxon>Methanocaldococcaceae</taxon>
        <taxon>Methanocaldococcus</taxon>
    </lineage>
</organism>